<sequence>MSLGLAGAQEVELTLETVIQTLESSVLCQEKGLGARDLAQDAQITSLPALIREIVTRNLSQPESPVLLPATEMASLLSLQEENQLLQQELSRVEDLLAQSRAERDELAIKYNAVSERLEQALRLEPGELETQEPRGLVRQSVELRRQLQEEQASYRRKLQAYQEGQQRQAQLVQRLQGKILQYKKRCSELEQQLLERSGELEQQRLRDTEHSQDLESALIRLEEEQQRSASLAQVNAMLREQLDQAGSANQALSEDIRKVTNDWTRCRKELEHREAAWRREEESFNAYFSNEHSRLLLLWRQVVGFRRLVSEVKMFTERDLLQLGGELARTSRAVQEAGLGLSTGLRLAESRAEAALEKQALLQAQLEEQLRDKVLREKDLAQQQMQSDLDKADLSARVTELGLAVKRLEKQNLEKDQVNKDLTEKLEALESLRLQEQAALETEDGEGLQQTLRDLAQAVLSDSESGVQLSGSERTADASNGSLRGLSGQRTPSPPRRSSPGRGRSPRRGPSPACSDSSTLALIHSALHKRQLQVQDMRGRYEASQDLLGTLRKQLSDSESERRALEEQLQRLRDKTDGAMQAHEDAQREVQRLRSANELLSREKSNLAHSLQVAQQQAEELRQEREKLQAAQEELRRQRDRLEEEQEDAVQDGARVRRELERSHRQLEQLEGKRSVLAKELVEVREALSRATLQRDMLQAEKAEVAEALTKAEAGRVELELSMTKLRAEEASLQDSLSKLSALNESLAQDKLDLNRLVAQLEEEKSALQGRQRQAEQEATVAREEQERLEELRLEQEVARQGLEGSLRVAEQAQEALEQQLPTLRHERSQLQEQLAQLSRQLSGREQELEQARREAQRQVEALERAAREKEALAKEHAGLAVQLVAAEREGRTLSEEATRLRLEKEALEGSLFEVQRQLAQLEARREQLEAEGQALLLAKETLTGELAGLRQQIIATQEKASLDKELMAQKLVQAEREAQASLREQRAAHEEDLQRLQREKEAAWRELEAERAQLQSQLQREQEELLARLEAEKEELSEEIAALQQERDEGLLLAESEKQQALSLKESEKTALSEKLMGTRHSLATISLEMERQKRDAQSRQEQDRSTVNALTSELRDLRAQREEAAAAHAQEVRRLQEQARDLGKQRDSCLREAEELRTQLRLLEDARDGLRRELLEAQRKLRESQEGREVQRQEAGELRRSLGEGAKEREALRRSNEELRSAVKKAESERISLKLANEDKEQKLALLEEARTAVGKEAGELRTGLQEVERSRLEARRELQELRRQMKMLDSENTRLGRELAELQGRLALGERAEKESRRETLGLRQRLLKGEASLEVMRQELQVAQRKLQEQEGEFRTRERRLLGSLEEARGTEKQQLDHARGLELKLEAARAEAAELGLRLSAAEGRAQGLEAELARVEVQRRAAEAQLGGLRSALRRGLGLGRAPSPAPRPVPGSPARDAPAEGSGEGLNSPSTLECSPGSQPPSPGPATSPASPDLDPEAVRGALREFLQELRSAQRERDELRTQTSALNRQLAEMEAERDSATSRARQLQKAVAESEEARRSVDGRLSGVQAELALQEESVRRSERERRATLDQVATLERSLQATESELRASQEKISKMKANETKLEGDKRRLKEVLDASESRTVKLELQRRSLEGELQRSRLGLSDREAQAQALQDRVDSLQRQVADSEVKAGTLQLTVERLNGALAKVEESEGALRDKVRGLTEALAQSSASLNSTRDKNLHLQKALTACEHDRQVLQERLDAARQALSEARKQSSSLGEQVQTLRGEVADLELQRVEAEGQLQQLREVLRQRQEGEAAALNTVQKLQDERRLLQERLGSLQRALAQLEAEKREVERSALRLEKDRVALRRTLDKVEREKLRSHEDTVRLSAEKGRLDRTLTGAELELAEAQRQIQQLEAQVVVLEQSHSPAQLEVDAQQQQLELQQEVERLRSAQAQTERTLEARERAHRQRVRGLEEQVSTLKGQLQQELRRSSAPFSPPSGPPEK</sequence>
<dbReference type="EMBL" id="DQ139275">
    <property type="protein sequence ID" value="ABA43896.1"/>
    <property type="molecule type" value="mRNA"/>
</dbReference>
<dbReference type="EMBL" id="BX284668">
    <property type="protein sequence ID" value="CAH70055.1"/>
    <property type="molecule type" value="Genomic_DNA"/>
</dbReference>
<dbReference type="EMBL" id="AL049569">
    <property type="protein sequence ID" value="CAH70055.1"/>
    <property type="status" value="JOINED"/>
    <property type="molecule type" value="Genomic_DNA"/>
</dbReference>
<dbReference type="EMBL" id="AL049569">
    <property type="protein sequence ID" value="CAI20363.1"/>
    <property type="molecule type" value="Genomic_DNA"/>
</dbReference>
<dbReference type="EMBL" id="BX284668">
    <property type="protein sequence ID" value="CAI20363.1"/>
    <property type="status" value="JOINED"/>
    <property type="molecule type" value="Genomic_DNA"/>
</dbReference>
<dbReference type="EMBL" id="AB007914">
    <property type="protein sequence ID" value="BAA32290.2"/>
    <property type="molecule type" value="mRNA"/>
</dbReference>
<dbReference type="EMBL" id="AF527734">
    <property type="protein sequence ID" value="AAP85633.1"/>
    <property type="molecule type" value="mRNA"/>
</dbReference>
<dbReference type="EMBL" id="BK005505">
    <property type="protein sequence ID" value="DAA05505.1"/>
    <property type="molecule type" value="mRNA"/>
</dbReference>
<dbReference type="CCDS" id="CCDS30616.1">
    <molecule id="Q5TZA2-1"/>
</dbReference>
<dbReference type="RefSeq" id="NP_055490.4">
    <molecule id="Q5TZA2-1"/>
    <property type="nucleotide sequence ID" value="NM_014675.4"/>
</dbReference>
<dbReference type="PDB" id="6L5H">
    <property type="method" value="X-ray"/>
    <property type="resolution" value="1.30 A"/>
    <property type="chains" value="A/B=1108-1200"/>
</dbReference>
<dbReference type="PDB" id="6L5J">
    <property type="method" value="X-ray"/>
    <property type="resolution" value="2.77 A"/>
    <property type="chains" value="A/B/C/D=1108-1317"/>
</dbReference>
<dbReference type="PDBsum" id="6L5H"/>
<dbReference type="PDBsum" id="6L5J"/>
<dbReference type="SMR" id="Q5TZA2"/>
<dbReference type="BioGRID" id="115048">
    <property type="interactions" value="57"/>
</dbReference>
<dbReference type="DIP" id="DIP-61715N"/>
<dbReference type="FunCoup" id="Q5TZA2">
    <property type="interactions" value="355"/>
</dbReference>
<dbReference type="IntAct" id="Q5TZA2">
    <property type="interactions" value="41"/>
</dbReference>
<dbReference type="MINT" id="Q5TZA2"/>
<dbReference type="STRING" id="9606.ENSP00000364691"/>
<dbReference type="GlyGen" id="Q5TZA2">
    <property type="glycosylation" value="2 sites, 1 O-linked glycan (2 sites)"/>
</dbReference>
<dbReference type="iPTMnet" id="Q5TZA2"/>
<dbReference type="PhosphoSitePlus" id="Q5TZA2"/>
<dbReference type="SwissPalm" id="Q5TZA2"/>
<dbReference type="BioMuta" id="CROCC"/>
<dbReference type="DMDM" id="74746681"/>
<dbReference type="jPOST" id="Q5TZA2"/>
<dbReference type="MassIVE" id="Q5TZA2"/>
<dbReference type="PaxDb" id="9606-ENSP00000364691"/>
<dbReference type="PeptideAtlas" id="Q5TZA2"/>
<dbReference type="ProteomicsDB" id="65215">
    <molecule id="Q5TZA2-1"/>
</dbReference>
<dbReference type="ProteomicsDB" id="65216">
    <molecule id="Q5TZA2-2"/>
</dbReference>
<dbReference type="Pumba" id="Q5TZA2"/>
<dbReference type="Antibodypedia" id="14565">
    <property type="antibodies" value="33 antibodies from 14 providers"/>
</dbReference>
<dbReference type="DNASU" id="9696"/>
<dbReference type="Ensembl" id="ENST00000375541.10">
    <molecule id="Q5TZA2-1"/>
    <property type="protein sequence ID" value="ENSP00000364691.4"/>
    <property type="gene ID" value="ENSG00000058453.17"/>
</dbReference>
<dbReference type="GeneID" id="9696"/>
<dbReference type="KEGG" id="hsa:9696"/>
<dbReference type="MANE-Select" id="ENST00000375541.10">
    <property type="protein sequence ID" value="ENSP00000364691.4"/>
    <property type="RefSeq nucleotide sequence ID" value="NM_014675.5"/>
    <property type="RefSeq protein sequence ID" value="NP_055490.4"/>
</dbReference>
<dbReference type="UCSC" id="uc001azt.2">
    <molecule id="Q5TZA2-1"/>
    <property type="organism name" value="human"/>
</dbReference>
<dbReference type="AGR" id="HGNC:21299"/>
<dbReference type="CTD" id="9696"/>
<dbReference type="DisGeNET" id="9696"/>
<dbReference type="GeneCards" id="CROCC"/>
<dbReference type="HGNC" id="HGNC:21299">
    <property type="gene designation" value="CROCC"/>
</dbReference>
<dbReference type="HPA" id="ENSG00000058453">
    <property type="expression patterns" value="Low tissue specificity"/>
</dbReference>
<dbReference type="MalaCards" id="CROCC"/>
<dbReference type="MIM" id="615776">
    <property type="type" value="gene"/>
</dbReference>
<dbReference type="neXtProt" id="NX_Q5TZA2"/>
<dbReference type="OpenTargets" id="ENSG00000058453"/>
<dbReference type="PharmGKB" id="PA134911945"/>
<dbReference type="VEuPathDB" id="HostDB:ENSG00000058453"/>
<dbReference type="eggNOG" id="ENOG502QQF0">
    <property type="taxonomic scope" value="Eukaryota"/>
</dbReference>
<dbReference type="GeneTree" id="ENSGT00940000155758"/>
<dbReference type="HOGENOM" id="CLU_000920_1_0_1"/>
<dbReference type="InParanoid" id="Q5TZA2"/>
<dbReference type="OMA" id="AGIQMDG"/>
<dbReference type="OrthoDB" id="3549872at2759"/>
<dbReference type="PAN-GO" id="Q5TZA2">
    <property type="GO annotations" value="3 GO annotations based on evolutionary models"/>
</dbReference>
<dbReference type="PhylomeDB" id="Q5TZA2"/>
<dbReference type="TreeFam" id="TF101138"/>
<dbReference type="PathwayCommons" id="Q5TZA2"/>
<dbReference type="SignaLink" id="Q5TZA2"/>
<dbReference type="SIGNOR" id="Q5TZA2"/>
<dbReference type="BioGRID-ORCS" id="9696">
    <property type="hits" value="51 hits in 1159 CRISPR screens"/>
</dbReference>
<dbReference type="CD-CODE" id="8C2F96ED">
    <property type="entry name" value="Centrosome"/>
</dbReference>
<dbReference type="CD-CODE" id="DEE660B4">
    <property type="entry name" value="Stress granule"/>
</dbReference>
<dbReference type="ChiTaRS" id="CROCC">
    <property type="organism name" value="human"/>
</dbReference>
<dbReference type="GeneWiki" id="Rootletin"/>
<dbReference type="GenomeRNAi" id="9696"/>
<dbReference type="Pharos" id="Q5TZA2">
    <property type="development level" value="Tbio"/>
</dbReference>
<dbReference type="PRO" id="PR:Q5TZA2"/>
<dbReference type="Proteomes" id="UP000005640">
    <property type="component" value="Chromosome 1"/>
</dbReference>
<dbReference type="RNAct" id="Q5TZA2">
    <property type="molecule type" value="protein"/>
</dbReference>
<dbReference type="Bgee" id="ENSG00000058453">
    <property type="expression patterns" value="Expressed in right uterine tube and 150 other cell types or tissues"/>
</dbReference>
<dbReference type="ExpressionAtlas" id="Q5TZA2">
    <property type="expression patterns" value="baseline and differential"/>
</dbReference>
<dbReference type="GO" id="GO:0097729">
    <property type="term" value="C:9+2 motile cilium"/>
    <property type="evidence" value="ECO:0007669"/>
    <property type="project" value="Ensembl"/>
</dbReference>
<dbReference type="GO" id="GO:0015629">
    <property type="term" value="C:actin cytoskeleton"/>
    <property type="evidence" value="ECO:0000314"/>
    <property type="project" value="HPA"/>
</dbReference>
<dbReference type="GO" id="GO:0005814">
    <property type="term" value="C:centriole"/>
    <property type="evidence" value="ECO:0000314"/>
    <property type="project" value="MGI"/>
</dbReference>
<dbReference type="GO" id="GO:0005813">
    <property type="term" value="C:centrosome"/>
    <property type="evidence" value="ECO:0000314"/>
    <property type="project" value="HPA"/>
</dbReference>
<dbReference type="GO" id="GO:0036064">
    <property type="term" value="C:ciliary basal body"/>
    <property type="evidence" value="ECO:0000314"/>
    <property type="project" value="HPA"/>
</dbReference>
<dbReference type="GO" id="GO:0035253">
    <property type="term" value="C:ciliary rootlet"/>
    <property type="evidence" value="ECO:0000250"/>
    <property type="project" value="UniProtKB"/>
</dbReference>
<dbReference type="GO" id="GO:0005829">
    <property type="term" value="C:cytosol"/>
    <property type="evidence" value="ECO:0000314"/>
    <property type="project" value="HPA"/>
</dbReference>
<dbReference type="GO" id="GO:0070062">
    <property type="term" value="C:extracellular exosome"/>
    <property type="evidence" value="ECO:0007005"/>
    <property type="project" value="UniProtKB"/>
</dbReference>
<dbReference type="GO" id="GO:0097386">
    <property type="term" value="C:glial cell projection"/>
    <property type="evidence" value="ECO:0007669"/>
    <property type="project" value="Ensembl"/>
</dbReference>
<dbReference type="GO" id="GO:0001917">
    <property type="term" value="C:photoreceptor inner segment"/>
    <property type="evidence" value="ECO:0007669"/>
    <property type="project" value="Ensembl"/>
</dbReference>
<dbReference type="GO" id="GO:0005886">
    <property type="term" value="C:plasma membrane"/>
    <property type="evidence" value="ECO:0000314"/>
    <property type="project" value="HPA"/>
</dbReference>
<dbReference type="GO" id="GO:0120219">
    <property type="term" value="C:subapical part of cell"/>
    <property type="evidence" value="ECO:0007669"/>
    <property type="project" value="Ensembl"/>
</dbReference>
<dbReference type="GO" id="GO:0003779">
    <property type="term" value="F:actin binding"/>
    <property type="evidence" value="ECO:0007669"/>
    <property type="project" value="Ensembl"/>
</dbReference>
<dbReference type="GO" id="GO:0019894">
    <property type="term" value="F:kinesin binding"/>
    <property type="evidence" value="ECO:0000250"/>
    <property type="project" value="UniProtKB"/>
</dbReference>
<dbReference type="GO" id="GO:0005200">
    <property type="term" value="F:structural constituent of cytoskeleton"/>
    <property type="evidence" value="ECO:0007669"/>
    <property type="project" value="Ensembl"/>
</dbReference>
<dbReference type="GO" id="GO:0005198">
    <property type="term" value="F:structural molecule activity"/>
    <property type="evidence" value="ECO:0000250"/>
    <property type="project" value="UniProtKB"/>
</dbReference>
<dbReference type="GO" id="GO:0019725">
    <property type="term" value="P:cellular homeostasis"/>
    <property type="evidence" value="ECO:0007669"/>
    <property type="project" value="Ensembl"/>
</dbReference>
<dbReference type="GO" id="GO:0010457">
    <property type="term" value="P:centriole-centriole cohesion"/>
    <property type="evidence" value="ECO:0000315"/>
    <property type="project" value="UniProtKB"/>
</dbReference>
<dbReference type="GO" id="GO:0007098">
    <property type="term" value="P:centrosome cycle"/>
    <property type="evidence" value="ECO:0000314"/>
    <property type="project" value="UniProtKB"/>
</dbReference>
<dbReference type="GO" id="GO:0032053">
    <property type="term" value="P:ciliary basal body organization"/>
    <property type="evidence" value="ECO:0007669"/>
    <property type="project" value="Ensembl"/>
</dbReference>
<dbReference type="GO" id="GO:0010669">
    <property type="term" value="P:epithelial structure maintenance"/>
    <property type="evidence" value="ECO:0007669"/>
    <property type="project" value="Ensembl"/>
</dbReference>
<dbReference type="GO" id="GO:0051649">
    <property type="term" value="P:establishment of localization in cell"/>
    <property type="evidence" value="ECO:0007669"/>
    <property type="project" value="Ensembl"/>
</dbReference>
<dbReference type="GO" id="GO:0051656">
    <property type="term" value="P:establishment of organelle localization"/>
    <property type="evidence" value="ECO:0007669"/>
    <property type="project" value="Ensembl"/>
</dbReference>
<dbReference type="GO" id="GO:0045494">
    <property type="term" value="P:photoreceptor cell maintenance"/>
    <property type="evidence" value="ECO:0007669"/>
    <property type="project" value="Ensembl"/>
</dbReference>
<dbReference type="GO" id="GO:0045724">
    <property type="term" value="P:positive regulation of cilium assembly"/>
    <property type="evidence" value="ECO:0000315"/>
    <property type="project" value="UniProtKB"/>
</dbReference>
<dbReference type="GO" id="GO:1903566">
    <property type="term" value="P:positive regulation of protein localization to cilium"/>
    <property type="evidence" value="ECO:0000315"/>
    <property type="project" value="UniProtKB"/>
</dbReference>
<dbReference type="GO" id="GO:0008104">
    <property type="term" value="P:protein localization"/>
    <property type="evidence" value="ECO:0000315"/>
    <property type="project" value="UniProtKB"/>
</dbReference>
<dbReference type="GO" id="GO:0033365">
    <property type="term" value="P:protein localization to organelle"/>
    <property type="evidence" value="ECO:0000315"/>
    <property type="project" value="UniProtKB"/>
</dbReference>
<dbReference type="Gene3D" id="1.10.287.1490">
    <property type="match status" value="2"/>
</dbReference>
<dbReference type="InterPro" id="IPR055167">
    <property type="entry name" value="Rootletin-like_CC"/>
</dbReference>
<dbReference type="PANTHER" id="PTHR23159">
    <property type="entry name" value="CENTROSOMAL PROTEIN 2"/>
    <property type="match status" value="1"/>
</dbReference>
<dbReference type="PANTHER" id="PTHR23159:SF60">
    <property type="entry name" value="SPINDLE ASSEMBLY ABNORMAL PROTEIN 4"/>
    <property type="match status" value="1"/>
</dbReference>
<dbReference type="Pfam" id="PF15035">
    <property type="entry name" value="Rootletin"/>
    <property type="match status" value="1"/>
</dbReference>
<dbReference type="SUPFAM" id="SSF57997">
    <property type="entry name" value="Tropomyosin"/>
    <property type="match status" value="1"/>
</dbReference>
<reference evidence="14 16" key="1">
    <citation type="submission" date="2005-07" db="EMBL/GenBank/DDBJ databases">
        <title>A centrosomal target of human T-cell leukemia virus type 1 oncoprotein Tax.</title>
        <authorList>
            <person name="Ching Y.-P."/>
            <person name="Chan S.-F."/>
            <person name="Jeang K.-T."/>
            <person name="Jin D.-Y."/>
        </authorList>
    </citation>
    <scope>NUCLEOTIDE SEQUENCE [MRNA] (ISOFORM 2)</scope>
</reference>
<reference key="2">
    <citation type="journal article" date="2006" name="Nature">
        <title>The DNA sequence and biological annotation of human chromosome 1.</title>
        <authorList>
            <person name="Gregory S.G."/>
            <person name="Barlow K.F."/>
            <person name="McLay K.E."/>
            <person name="Kaul R."/>
            <person name="Swarbreck D."/>
            <person name="Dunham A."/>
            <person name="Scott C.E."/>
            <person name="Howe K.L."/>
            <person name="Woodfine K."/>
            <person name="Spencer C.C.A."/>
            <person name="Jones M.C."/>
            <person name="Gillson C."/>
            <person name="Searle S."/>
            <person name="Zhou Y."/>
            <person name="Kokocinski F."/>
            <person name="McDonald L."/>
            <person name="Evans R."/>
            <person name="Phillips K."/>
            <person name="Atkinson A."/>
            <person name="Cooper R."/>
            <person name="Jones C."/>
            <person name="Hall R.E."/>
            <person name="Andrews T.D."/>
            <person name="Lloyd C."/>
            <person name="Ainscough R."/>
            <person name="Almeida J.P."/>
            <person name="Ambrose K.D."/>
            <person name="Anderson F."/>
            <person name="Andrew R.W."/>
            <person name="Ashwell R.I.S."/>
            <person name="Aubin K."/>
            <person name="Babbage A.K."/>
            <person name="Bagguley C.L."/>
            <person name="Bailey J."/>
            <person name="Beasley H."/>
            <person name="Bethel G."/>
            <person name="Bird C.P."/>
            <person name="Bray-Allen S."/>
            <person name="Brown J.Y."/>
            <person name="Brown A.J."/>
            <person name="Buckley D."/>
            <person name="Burton J."/>
            <person name="Bye J."/>
            <person name="Carder C."/>
            <person name="Chapman J.C."/>
            <person name="Clark S.Y."/>
            <person name="Clarke G."/>
            <person name="Clee C."/>
            <person name="Cobley V."/>
            <person name="Collier R.E."/>
            <person name="Corby N."/>
            <person name="Coville G.J."/>
            <person name="Davies J."/>
            <person name="Deadman R."/>
            <person name="Dunn M."/>
            <person name="Earthrowl M."/>
            <person name="Ellington A.G."/>
            <person name="Errington H."/>
            <person name="Frankish A."/>
            <person name="Frankland J."/>
            <person name="French L."/>
            <person name="Garner P."/>
            <person name="Garnett J."/>
            <person name="Gay L."/>
            <person name="Ghori M.R.J."/>
            <person name="Gibson R."/>
            <person name="Gilby L.M."/>
            <person name="Gillett W."/>
            <person name="Glithero R.J."/>
            <person name="Grafham D.V."/>
            <person name="Griffiths C."/>
            <person name="Griffiths-Jones S."/>
            <person name="Grocock R."/>
            <person name="Hammond S."/>
            <person name="Harrison E.S.I."/>
            <person name="Hart E."/>
            <person name="Haugen E."/>
            <person name="Heath P.D."/>
            <person name="Holmes S."/>
            <person name="Holt K."/>
            <person name="Howden P.J."/>
            <person name="Hunt A.R."/>
            <person name="Hunt S.E."/>
            <person name="Hunter G."/>
            <person name="Isherwood J."/>
            <person name="James R."/>
            <person name="Johnson C."/>
            <person name="Johnson D."/>
            <person name="Joy A."/>
            <person name="Kay M."/>
            <person name="Kershaw J.K."/>
            <person name="Kibukawa M."/>
            <person name="Kimberley A.M."/>
            <person name="King A."/>
            <person name="Knights A.J."/>
            <person name="Lad H."/>
            <person name="Laird G."/>
            <person name="Lawlor S."/>
            <person name="Leongamornlert D.A."/>
            <person name="Lloyd D.M."/>
            <person name="Loveland J."/>
            <person name="Lovell J."/>
            <person name="Lush M.J."/>
            <person name="Lyne R."/>
            <person name="Martin S."/>
            <person name="Mashreghi-Mohammadi M."/>
            <person name="Matthews L."/>
            <person name="Matthews N.S.W."/>
            <person name="McLaren S."/>
            <person name="Milne S."/>
            <person name="Mistry S."/>
            <person name="Moore M.J.F."/>
            <person name="Nickerson T."/>
            <person name="O'Dell C.N."/>
            <person name="Oliver K."/>
            <person name="Palmeiri A."/>
            <person name="Palmer S.A."/>
            <person name="Parker A."/>
            <person name="Patel D."/>
            <person name="Pearce A.V."/>
            <person name="Peck A.I."/>
            <person name="Pelan S."/>
            <person name="Phelps K."/>
            <person name="Phillimore B.J."/>
            <person name="Plumb R."/>
            <person name="Rajan J."/>
            <person name="Raymond C."/>
            <person name="Rouse G."/>
            <person name="Saenphimmachak C."/>
            <person name="Sehra H.K."/>
            <person name="Sheridan E."/>
            <person name="Shownkeen R."/>
            <person name="Sims S."/>
            <person name="Skuce C.D."/>
            <person name="Smith M."/>
            <person name="Steward C."/>
            <person name="Subramanian S."/>
            <person name="Sycamore N."/>
            <person name="Tracey A."/>
            <person name="Tromans A."/>
            <person name="Van Helmond Z."/>
            <person name="Wall M."/>
            <person name="Wallis J.M."/>
            <person name="White S."/>
            <person name="Whitehead S.L."/>
            <person name="Wilkinson J.E."/>
            <person name="Willey D.L."/>
            <person name="Williams H."/>
            <person name="Wilming L."/>
            <person name="Wray P.W."/>
            <person name="Wu Z."/>
            <person name="Coulson A."/>
            <person name="Vaudin M."/>
            <person name="Sulston J.E."/>
            <person name="Durbin R.M."/>
            <person name="Hubbard T."/>
            <person name="Wooster R."/>
            <person name="Dunham I."/>
            <person name="Carter N.P."/>
            <person name="McVean G."/>
            <person name="Ross M.T."/>
            <person name="Harrow J."/>
            <person name="Olson M.V."/>
            <person name="Beck S."/>
            <person name="Rogers J."/>
            <person name="Bentley D.R."/>
        </authorList>
    </citation>
    <scope>NUCLEOTIDE SEQUENCE [LARGE SCALE GENOMIC DNA]</scope>
</reference>
<reference evidence="14 17" key="3">
    <citation type="journal article" date="1997" name="DNA Res.">
        <title>Characterization of cDNA clones in size-fractionated cDNA libraries from human brain.</title>
        <authorList>
            <person name="Seki N."/>
            <person name="Ohira M."/>
            <person name="Nagase T."/>
            <person name="Ishikawa K."/>
            <person name="Miyajima N."/>
            <person name="Nakajima D."/>
            <person name="Nomura N."/>
            <person name="Ohara O."/>
        </authorList>
    </citation>
    <scope>NUCLEOTIDE SEQUENCE [LARGE SCALE MRNA] OF 99-2017 (ISOFORM 1)</scope>
    <source>
        <tissue evidence="17">Brain</tissue>
    </source>
</reference>
<reference evidence="14 15" key="4">
    <citation type="journal article" date="2003" name="Int. J. Cancer">
        <title>Novel tumor antigens identified by autologous antibody screening of childhood medulloblastoma cDNA libraries.</title>
        <authorList>
            <person name="Behrends U."/>
            <person name="Schneider I."/>
            <person name="Roessler S."/>
            <person name="Frauenknecht H."/>
            <person name="Golbeck A."/>
            <person name="Lechner B."/>
            <person name="Eigenstetter G."/>
            <person name="Zobywalski C."/>
            <person name="Mueller-Weihrich S."/>
            <person name="Graubner U."/>
            <person name="Schmid I."/>
            <person name="Sackerer D."/>
            <person name="Spaeth M."/>
            <person name="Goetz C."/>
            <person name="Prantl F."/>
            <person name="Asmuss H.-P."/>
            <person name="Bise K."/>
            <person name="Mautner J."/>
        </authorList>
    </citation>
    <scope>NUCLEOTIDE SEQUENCE [MRNA] OF 1572-2017 (ISOFORM 2)</scope>
    <source>
        <tissue evidence="15">Medulloblastoma</tissue>
    </source>
</reference>
<reference evidence="14 19" key="5">
    <citation type="journal article" date="2003" name="Nature">
        <title>Proteomic characterization of the human centrosome by protein correlation profiling.</title>
        <authorList>
            <person name="Andersen J.S."/>
            <person name="Wilkinson C.J."/>
            <person name="Mayor T."/>
            <person name="Mortensen P."/>
            <person name="Nigg E.A."/>
            <person name="Mann M."/>
        </authorList>
    </citation>
    <scope>IDENTIFICATION BY MASS SPECTROMETRY</scope>
    <scope>SUBCELLULAR LOCATION [LARGE SCALE ANALYSIS]</scope>
    <source>
        <tissue>Lymphoblast</tissue>
    </source>
</reference>
<reference evidence="14" key="6">
    <citation type="journal article" date="2005" name="J. Cell Biol.">
        <title>Rootletin forms centriole-associated filaments and functions in centrosome cohesion.</title>
        <authorList>
            <person name="Bahe S."/>
            <person name="Stierhof Y.-D."/>
            <person name="Wilkinson C.J."/>
            <person name="Leiss F."/>
            <person name="Nigg E.A."/>
        </authorList>
    </citation>
    <scope>FUNCTION</scope>
    <scope>INTERACTION WITH CEP250 AND NEK2</scope>
    <scope>PHOSPHORYLATION</scope>
</reference>
<reference key="7">
    <citation type="journal article" date="2011" name="Sci. Signal.">
        <title>System-wide temporal characterization of the proteome and phosphoproteome of human embryonic stem cell differentiation.</title>
        <authorList>
            <person name="Rigbolt K.T."/>
            <person name="Prokhorova T.A."/>
            <person name="Akimov V."/>
            <person name="Henningsen J."/>
            <person name="Johansen P.T."/>
            <person name="Kratchmarova I."/>
            <person name="Kassem M."/>
            <person name="Mann M."/>
            <person name="Olsen J.V."/>
            <person name="Blagoev B."/>
        </authorList>
    </citation>
    <scope>PHOSPHORYLATION [LARGE SCALE ANALYSIS] AT SER-1460 AND SER-1660</scope>
    <scope>IDENTIFICATION BY MASS SPECTROMETRY [LARGE SCALE ANALYSIS]</scope>
</reference>
<reference key="8">
    <citation type="journal article" date="2014" name="J. Proteomics">
        <title>An enzyme assisted RP-RPLC approach for in-depth analysis of human liver phosphoproteome.</title>
        <authorList>
            <person name="Bian Y."/>
            <person name="Song C."/>
            <person name="Cheng K."/>
            <person name="Dong M."/>
            <person name="Wang F."/>
            <person name="Huang J."/>
            <person name="Sun D."/>
            <person name="Wang L."/>
            <person name="Ye M."/>
            <person name="Zou H."/>
        </authorList>
    </citation>
    <scope>PHOSPHORYLATION [LARGE SCALE ANALYSIS] AT SER-1476</scope>
    <scope>IDENTIFICATION BY MASS SPECTROMETRY [LARGE SCALE ANALYSIS]</scope>
    <source>
        <tissue>Liver</tissue>
    </source>
</reference>
<reference key="9">
    <citation type="journal article" date="2016" name="Dev. Cell">
        <title>A Conserved role for girdin in basal body positioning and ciliogenesis.</title>
        <authorList>
            <person name="Nechipurenko I.V."/>
            <person name="Olivier-Mason A."/>
            <person name="Kazatskaya A."/>
            <person name="Kennedy J."/>
            <person name="McLachlan I.G."/>
            <person name="Heiman M.G."/>
            <person name="Blacque O.E."/>
            <person name="Sengupta P."/>
        </authorList>
    </citation>
    <scope>FUNCTION</scope>
    <scope>SUBCELLULAR LOCATION</scope>
</reference>
<reference key="10">
    <citation type="journal article" date="2018" name="J. Cell Sci.">
        <title>CCDC102B functions in centrosome linker assembly and centrosome cohesion.</title>
        <authorList>
            <person name="Xia Y."/>
            <person name="Huang N."/>
            <person name="Chen Z."/>
            <person name="Li F."/>
            <person name="Fan G."/>
            <person name="Ma D."/>
            <person name="Chen J."/>
            <person name="Teng J."/>
        </authorList>
    </citation>
    <scope>INTERACTION WITH CCDC102B</scope>
</reference>
<reference key="11">
    <citation type="journal article" date="2020" name="J. Cell Sci.">
        <title>Cep44 functions in centrosome cohesion by stabilizing rootletin.</title>
        <authorList>
            <person name="Hossain D."/>
            <person name="Shih S.Y."/>
            <person name="Xiao X."/>
            <person name="White J."/>
            <person name="Tsang W.Y."/>
        </authorList>
    </citation>
    <scope>SUBCELLULAR LOCATION</scope>
    <scope>INTERACTION WITH CEP44</scope>
</reference>
<reference key="12">
    <citation type="journal article" date="2018" name="Am. J. Hum. Genet.">
        <title>De Novo Truncating Mutations in WASF1 Cause Intellectual Disability with Seizures.</title>
        <authorList>
            <consortium name="NIHR BioResource"/>
            <consortium name="Care4Rare Canada Consortium"/>
            <person name="Ito Y."/>
            <person name="Carss K.J."/>
            <person name="Duarte S.T."/>
            <person name="Hartley T."/>
            <person name="Keren B."/>
            <person name="Kurian M.A."/>
            <person name="Marey I."/>
            <person name="Charles P."/>
            <person name="Mendonca C."/>
            <person name="Nava C."/>
            <person name="Pfundt R."/>
            <person name="Sanchis-Juan A."/>
            <person name="van Bokhoven H."/>
            <person name="van Essen A."/>
            <person name="van Ravenswaaij-Arts C."/>
            <person name="Boycott K.M."/>
            <person name="Kernohan K.D."/>
            <person name="Dyack S."/>
            <person name="Raymond F.L."/>
        </authorList>
    </citation>
    <scope>VARIANTS TRP-1216 AND CYS-1866</scope>
</reference>
<evidence type="ECO:0000250" key="1">
    <source>
        <dbReference type="UniProtKB" id="Q8CJ40"/>
    </source>
</evidence>
<evidence type="ECO:0000255" key="2"/>
<evidence type="ECO:0000256" key="3">
    <source>
        <dbReference type="SAM" id="MobiDB-lite"/>
    </source>
</evidence>
<evidence type="ECO:0000269" key="4">
    <source>
    </source>
</evidence>
<evidence type="ECO:0000269" key="5">
    <source>
    </source>
</evidence>
<evidence type="ECO:0000269" key="6">
    <source>
    </source>
</evidence>
<evidence type="ECO:0000269" key="7">
    <source>
    </source>
</evidence>
<evidence type="ECO:0000269" key="8">
    <source>
    </source>
</evidence>
<evidence type="ECO:0000269" key="9">
    <source>
    </source>
</evidence>
<evidence type="ECO:0000269" key="10">
    <source>
    </source>
</evidence>
<evidence type="ECO:0000269" key="11">
    <source ref="1"/>
</evidence>
<evidence type="ECO:0000303" key="12">
    <source>
    </source>
</evidence>
<evidence type="ECO:0000303" key="13">
    <source ref="1"/>
</evidence>
<evidence type="ECO:0000305" key="14"/>
<evidence type="ECO:0000312" key="15">
    <source>
        <dbReference type="EMBL" id="AAP85633.1"/>
    </source>
</evidence>
<evidence type="ECO:0000312" key="16">
    <source>
        <dbReference type="EMBL" id="ABA43896.1"/>
    </source>
</evidence>
<evidence type="ECO:0000312" key="17">
    <source>
        <dbReference type="EMBL" id="BAA32290.2"/>
    </source>
</evidence>
<evidence type="ECO:0000312" key="18">
    <source>
        <dbReference type="EMBL" id="CAH70055.1"/>
    </source>
</evidence>
<evidence type="ECO:0000312" key="19">
    <source>
        <dbReference type="EMBL" id="DAA05505.1"/>
    </source>
</evidence>
<evidence type="ECO:0007744" key="20">
    <source>
    </source>
</evidence>
<evidence type="ECO:0007744" key="21">
    <source>
    </source>
</evidence>
<evidence type="ECO:0007829" key="22">
    <source>
        <dbReference type="PDB" id="6L5H"/>
    </source>
</evidence>
<organism>
    <name type="scientific">Homo sapiens</name>
    <name type="common">Human</name>
    <dbReference type="NCBI Taxonomy" id="9606"/>
    <lineage>
        <taxon>Eukaryota</taxon>
        <taxon>Metazoa</taxon>
        <taxon>Chordata</taxon>
        <taxon>Craniata</taxon>
        <taxon>Vertebrata</taxon>
        <taxon>Euteleostomi</taxon>
        <taxon>Mammalia</taxon>
        <taxon>Eutheria</taxon>
        <taxon>Euarchontoglires</taxon>
        <taxon>Primates</taxon>
        <taxon>Haplorrhini</taxon>
        <taxon>Catarrhini</taxon>
        <taxon>Hominidae</taxon>
        <taxon>Homo</taxon>
    </lineage>
</organism>
<protein>
    <recommendedName>
        <fullName>Rootletin</fullName>
    </recommendedName>
    <alternativeName>
        <fullName>Ciliary rootlet coiled-coil protein</fullName>
    </alternativeName>
</protein>
<gene>
    <name evidence="18" type="primary">CROCC</name>
    <name evidence="17" type="synonym">KIAA0445</name>
</gene>
<feature type="chain" id="PRO_0000239943" description="Rootletin">
    <location>
        <begin position="1"/>
        <end position="2017"/>
    </location>
</feature>
<feature type="region of interest" description="Disordered" evidence="3">
    <location>
        <begin position="464"/>
        <end position="518"/>
    </location>
</feature>
<feature type="region of interest" description="Disordered" evidence="3">
    <location>
        <begin position="1184"/>
        <end position="1226"/>
    </location>
</feature>
<feature type="region of interest" description="Disordered" evidence="3">
    <location>
        <begin position="1443"/>
        <end position="1575"/>
    </location>
</feature>
<feature type="region of interest" description="Disordered" evidence="3">
    <location>
        <begin position="1962"/>
        <end position="2017"/>
    </location>
</feature>
<feature type="coiled-coil region" evidence="2">
    <location>
        <begin position="70"/>
        <end position="262"/>
    </location>
</feature>
<feature type="coiled-coil region" evidence="2">
    <location>
        <begin position="318"/>
        <end position="444"/>
    </location>
</feature>
<feature type="coiled-coil region" evidence="2">
    <location>
        <begin position="546"/>
        <end position="1058"/>
    </location>
</feature>
<feature type="coiled-coil region" evidence="2">
    <location>
        <begin position="1091"/>
        <end position="1438"/>
    </location>
</feature>
<feature type="coiled-coil region" evidence="2">
    <location>
        <begin position="1505"/>
        <end position="1704"/>
    </location>
</feature>
<feature type="compositionally biased region" description="Polar residues" evidence="3">
    <location>
        <begin position="464"/>
        <end position="483"/>
    </location>
</feature>
<feature type="compositionally biased region" description="Low complexity" evidence="3">
    <location>
        <begin position="499"/>
        <end position="513"/>
    </location>
</feature>
<feature type="compositionally biased region" description="Basic and acidic residues" evidence="3">
    <location>
        <begin position="1510"/>
        <end position="1529"/>
    </location>
</feature>
<feature type="compositionally biased region" description="Polar residues" evidence="3">
    <location>
        <begin position="1989"/>
        <end position="1999"/>
    </location>
</feature>
<feature type="compositionally biased region" description="Pro residues" evidence="3">
    <location>
        <begin position="2008"/>
        <end position="2017"/>
    </location>
</feature>
<feature type="modified residue" description="Phosphoserine" evidence="20">
    <location>
        <position position="1460"/>
    </location>
</feature>
<feature type="modified residue" description="Phosphoserine" evidence="1">
    <location>
        <position position="1470"/>
    </location>
</feature>
<feature type="modified residue" description="Phosphoserine" evidence="21">
    <location>
        <position position="1476"/>
    </location>
</feature>
<feature type="modified residue" description="Phosphoserine" evidence="1">
    <location>
        <position position="1483"/>
    </location>
</feature>
<feature type="modified residue" description="Phosphoserine" evidence="1">
    <location>
        <position position="1486"/>
    </location>
</feature>
<feature type="modified residue" description="Phosphoserine" evidence="1">
    <location>
        <position position="1490"/>
    </location>
</feature>
<feature type="modified residue" description="Phosphoserine" evidence="1">
    <location>
        <position position="1496"/>
    </location>
</feature>
<feature type="modified residue" description="Phosphoserine" evidence="1">
    <location>
        <position position="1575"/>
    </location>
</feature>
<feature type="modified residue" description="Phosphoserine" evidence="20">
    <location>
        <position position="1660"/>
    </location>
</feature>
<feature type="splice variant" id="VSP_052069" description="In isoform 2." evidence="12 13">
    <location>
        <begin position="1"/>
        <end position="697"/>
    </location>
</feature>
<feature type="splice variant" id="VSP_052070" description="In isoform 2." evidence="12 13">
    <location>
        <begin position="1984"/>
        <end position="1990"/>
    </location>
</feature>
<feature type="sequence variant" id="VAR_061626" description="In dbSNP:rs6586566.">
    <original>G</original>
    <variation>R</variation>
    <location>
        <position position="7"/>
    </location>
</feature>
<feature type="sequence variant" id="VAR_061627" description="In dbSNP:rs57442576.">
    <original>R</original>
    <variation>Q</variation>
    <location>
        <position position="372"/>
    </location>
</feature>
<feature type="sequence variant" id="VAR_059628" description="In dbSNP:rs4463721.">
    <original>A</original>
    <variation>V</variation>
    <location>
        <position position="439"/>
    </location>
</feature>
<feature type="sequence variant" id="VAR_059629" description="In dbSNP:rs9435714.">
    <original>D</original>
    <variation>H</variation>
    <location>
        <position position="586"/>
    </location>
</feature>
<feature type="sequence variant" id="VAR_059630" description="In dbSNP:rs6669627.">
    <original>R</original>
    <variation>P</variation>
    <location>
        <position position="1097"/>
    </location>
</feature>
<feature type="sequence variant" id="VAR_083473" description="In dbSNP:rs749003874." evidence="7">
    <original>R</original>
    <variation>W</variation>
    <location>
        <position position="1216"/>
    </location>
</feature>
<feature type="sequence variant" id="VAR_083474" description="In dbSNP:rs374780265." evidence="7">
    <original>R</original>
    <variation>C</variation>
    <location>
        <position position="1866"/>
    </location>
</feature>
<feature type="helix" evidence="22">
    <location>
        <begin position="1108"/>
        <end position="1186"/>
    </location>
</feature>
<keyword id="KW-0002">3D-structure</keyword>
<keyword id="KW-0025">Alternative splicing</keyword>
<keyword id="KW-0131">Cell cycle</keyword>
<keyword id="KW-0966">Cell projection</keyword>
<keyword id="KW-0969">Cilium</keyword>
<keyword id="KW-0970">Cilium biogenesis/degradation</keyword>
<keyword id="KW-0175">Coiled coil</keyword>
<keyword id="KW-0963">Cytoplasm</keyword>
<keyword id="KW-0206">Cytoskeleton</keyword>
<keyword id="KW-0597">Phosphoprotein</keyword>
<keyword id="KW-1267">Proteomics identification</keyword>
<keyword id="KW-1185">Reference proteome</keyword>
<proteinExistence type="evidence at protein level"/>
<name>CROCC_HUMAN</name>
<comment type="function">
    <text evidence="1 5 6">Major structural component of the ciliary rootlet, a cytoskeletal-like structure in ciliated cells which originates from the basal body at the proximal end of a cilium and extends proximally toward the cell nucleus (By similarity). Furthermore, is required for the correct positioning of the cilium basal body relative to the cell nucleus, to allow for ciliogenesis (PubMed:27623382). Contributes to centrosome cohesion before mitosis (PubMed:16203858).</text>
</comment>
<comment type="subunit">
    <text evidence="5 8 9">Homomer. Interacts with KLC3, NEK2 and the N-terminus of CEP250. Interacts with CEP44 (PubMed:31974111). Interacts with CCDC102B (via N-terminus).</text>
</comment>
<comment type="subcellular location">
    <subcellularLocation>
        <location evidence="4">Cytoplasm</location>
        <location evidence="4">Cytoskeleton</location>
        <location evidence="4">Microtubule organizing center</location>
        <location evidence="4">Centrosome</location>
        <location evidence="4">Centriole</location>
    </subcellularLocation>
    <subcellularLocation>
        <location evidence="6">Cytoplasm</location>
        <location evidence="6">Cytoskeleton</location>
        <location evidence="6">Cilium basal body</location>
    </subcellularLocation>
    <subcellularLocation>
        <location evidence="6 9">Cytoplasm</location>
        <location evidence="6 9">Cytoskeleton</location>
        <location evidence="6 9">Microtubule organizing center</location>
        <location evidence="6 9">Centrosome</location>
    </subcellularLocation>
    <text evidence="4">In ciliated cells, associated with ciliary rootlets. In non-ciliated cells, localized between, around and at the proximal ends of the centrioles. Dissociates from the centrioles at the onset of mitosis and reassociates with them at anaphase.</text>
</comment>
<comment type="alternative products">
    <event type="alternative splicing"/>
    <isoform>
        <id>Q5TZA2-1</id>
        <name evidence="10">1</name>
        <sequence type="displayed"/>
    </isoform>
    <isoform>
        <id>Q5TZA2-2</id>
        <name evidence="11">2</name>
        <sequence type="described" ref="VSP_052069 VSP_052070"/>
    </isoform>
</comment>
<comment type="PTM">
    <text evidence="5">Phosphorylated by NEK2 which may regulate its association with centrosomes.</text>
</comment>
<comment type="similarity">
    <text evidence="14">Belongs to the rootletin family.</text>
</comment>
<accession>Q5TZA2</accession>
<accession>Q2VHY3</accession>
<accession>Q66GT7</accession>
<accession>Q7Z2L4</accession>
<accession>Q7Z5D7</accession>